<proteinExistence type="inferred from homology"/>
<feature type="chain" id="PRO_1000139724" description="HTH-type transcriptional repressor NanR">
    <location>
        <begin position="1"/>
        <end position="263"/>
    </location>
</feature>
<feature type="domain" description="HTH gntR-type" evidence="1">
    <location>
        <begin position="30"/>
        <end position="98"/>
    </location>
</feature>
<feature type="DNA-binding region" description="H-T-H motif" evidence="1">
    <location>
        <begin position="58"/>
        <end position="77"/>
    </location>
</feature>
<feature type="region of interest" description="Disordered" evidence="2">
    <location>
        <begin position="1"/>
        <end position="22"/>
    </location>
</feature>
<gene>
    <name evidence="1" type="primary">nanR</name>
    <name type="ordered locus">ECSE_3505</name>
</gene>
<sequence length="263" mass="29494">MGLMNAFDSQTEDSSPAIGRNLRSRPLARKKLSEMVEEELEQMIRRREFGEGEQLPSERELMAFFNVGRPSVREALAALKRKGLVQINNGERARVSRPSADTIIGELSGMAKDFLSHPGGIAHFEQLRLFFESSLVRYAAEHATDEQIDLLAKALEINSQSLDNNAAFIRSDVDFHRVLAEIPGNPIFMAIHVALLDWLIAARPTVADQALHEHNNVSYQQHIAIVDAIRRHDPDEADRALQSHLNSVSATWHAFGQTTNKKK</sequence>
<organism>
    <name type="scientific">Escherichia coli (strain SE11)</name>
    <dbReference type="NCBI Taxonomy" id="409438"/>
    <lineage>
        <taxon>Bacteria</taxon>
        <taxon>Pseudomonadati</taxon>
        <taxon>Pseudomonadota</taxon>
        <taxon>Gammaproteobacteria</taxon>
        <taxon>Enterobacterales</taxon>
        <taxon>Enterobacteriaceae</taxon>
        <taxon>Escherichia</taxon>
    </lineage>
</organism>
<keyword id="KW-0238">DNA-binding</keyword>
<keyword id="KW-0678">Repressor</keyword>
<keyword id="KW-0804">Transcription</keyword>
<keyword id="KW-0805">Transcription regulation</keyword>
<reference key="1">
    <citation type="journal article" date="2008" name="DNA Res.">
        <title>Complete genome sequence and comparative analysis of the wild-type commensal Escherichia coli strain SE11 isolated from a healthy adult.</title>
        <authorList>
            <person name="Oshima K."/>
            <person name="Toh H."/>
            <person name="Ogura Y."/>
            <person name="Sasamoto H."/>
            <person name="Morita H."/>
            <person name="Park S.-H."/>
            <person name="Ooka T."/>
            <person name="Iyoda S."/>
            <person name="Taylor T.D."/>
            <person name="Hayashi T."/>
            <person name="Itoh K."/>
            <person name="Hattori M."/>
        </authorList>
    </citation>
    <scope>NUCLEOTIDE SEQUENCE [LARGE SCALE GENOMIC DNA]</scope>
    <source>
        <strain>SE11</strain>
    </source>
</reference>
<comment type="function">
    <text evidence="1">Transcriptional repressor that controls expression of the genes required for the catabolism of sialic acids.</text>
</comment>
<comment type="similarity">
    <text evidence="1">Belongs to the NanR family.</text>
</comment>
<name>NANR_ECOSE</name>
<accession>B6I1U4</accession>
<dbReference type="EMBL" id="AP009240">
    <property type="protein sequence ID" value="BAG79029.1"/>
    <property type="molecule type" value="Genomic_DNA"/>
</dbReference>
<dbReference type="RefSeq" id="WP_000523844.1">
    <property type="nucleotide sequence ID" value="NC_011415.1"/>
</dbReference>
<dbReference type="SMR" id="B6I1U4"/>
<dbReference type="GeneID" id="75173394"/>
<dbReference type="KEGG" id="ecy:ECSE_3505"/>
<dbReference type="HOGENOM" id="CLU_017584_9_1_6"/>
<dbReference type="Proteomes" id="UP000008199">
    <property type="component" value="Chromosome"/>
</dbReference>
<dbReference type="GO" id="GO:0003677">
    <property type="term" value="F:DNA binding"/>
    <property type="evidence" value="ECO:0007669"/>
    <property type="project" value="UniProtKB-KW"/>
</dbReference>
<dbReference type="GO" id="GO:0003700">
    <property type="term" value="F:DNA-binding transcription factor activity"/>
    <property type="evidence" value="ECO:0007669"/>
    <property type="project" value="UniProtKB-UniRule"/>
</dbReference>
<dbReference type="GO" id="GO:0045892">
    <property type="term" value="P:negative regulation of DNA-templated transcription"/>
    <property type="evidence" value="ECO:0007669"/>
    <property type="project" value="UniProtKB-UniRule"/>
</dbReference>
<dbReference type="CDD" id="cd07377">
    <property type="entry name" value="WHTH_GntR"/>
    <property type="match status" value="1"/>
</dbReference>
<dbReference type="FunFam" id="1.10.10.10:FF:000150">
    <property type="entry name" value="HTH-type transcriptional repressor NanR"/>
    <property type="match status" value="1"/>
</dbReference>
<dbReference type="FunFam" id="1.20.120.530:FF:000006">
    <property type="entry name" value="HTH-type transcriptional repressor NanR"/>
    <property type="match status" value="1"/>
</dbReference>
<dbReference type="Gene3D" id="1.20.120.530">
    <property type="entry name" value="GntR ligand-binding domain-like"/>
    <property type="match status" value="1"/>
</dbReference>
<dbReference type="Gene3D" id="1.10.10.10">
    <property type="entry name" value="Winged helix-like DNA-binding domain superfamily/Winged helix DNA-binding domain"/>
    <property type="match status" value="1"/>
</dbReference>
<dbReference type="HAMAP" id="MF_01236">
    <property type="entry name" value="HTH_NanR"/>
    <property type="match status" value="1"/>
</dbReference>
<dbReference type="InterPro" id="IPR011711">
    <property type="entry name" value="GntR_C"/>
</dbReference>
<dbReference type="InterPro" id="IPR008920">
    <property type="entry name" value="TF_FadR/GntR_C"/>
</dbReference>
<dbReference type="InterPro" id="IPR000524">
    <property type="entry name" value="Tscrpt_reg_HTH_GntR"/>
</dbReference>
<dbReference type="InterPro" id="IPR023730">
    <property type="entry name" value="Tscrpt_reg_NanR"/>
</dbReference>
<dbReference type="InterPro" id="IPR036388">
    <property type="entry name" value="WH-like_DNA-bd_sf"/>
</dbReference>
<dbReference type="InterPro" id="IPR036390">
    <property type="entry name" value="WH_DNA-bd_sf"/>
</dbReference>
<dbReference type="NCBIfam" id="NF003011">
    <property type="entry name" value="PRK03837.1"/>
    <property type="match status" value="1"/>
</dbReference>
<dbReference type="PANTHER" id="PTHR43537:SF53">
    <property type="entry name" value="HTH-TYPE TRANSCRIPTIONAL REPRESSOR NANR"/>
    <property type="match status" value="1"/>
</dbReference>
<dbReference type="PANTHER" id="PTHR43537">
    <property type="entry name" value="TRANSCRIPTIONAL REGULATOR, GNTR FAMILY"/>
    <property type="match status" value="1"/>
</dbReference>
<dbReference type="Pfam" id="PF07729">
    <property type="entry name" value="FCD"/>
    <property type="match status" value="1"/>
</dbReference>
<dbReference type="Pfam" id="PF00392">
    <property type="entry name" value="GntR"/>
    <property type="match status" value="1"/>
</dbReference>
<dbReference type="PRINTS" id="PR00035">
    <property type="entry name" value="HTHGNTR"/>
</dbReference>
<dbReference type="SMART" id="SM00895">
    <property type="entry name" value="FCD"/>
    <property type="match status" value="1"/>
</dbReference>
<dbReference type="SMART" id="SM00345">
    <property type="entry name" value="HTH_GNTR"/>
    <property type="match status" value="1"/>
</dbReference>
<dbReference type="SUPFAM" id="SSF48008">
    <property type="entry name" value="GntR ligand-binding domain-like"/>
    <property type="match status" value="1"/>
</dbReference>
<dbReference type="SUPFAM" id="SSF46785">
    <property type="entry name" value="Winged helix' DNA-binding domain"/>
    <property type="match status" value="1"/>
</dbReference>
<dbReference type="PROSITE" id="PS50949">
    <property type="entry name" value="HTH_GNTR"/>
    <property type="match status" value="1"/>
</dbReference>
<evidence type="ECO:0000255" key="1">
    <source>
        <dbReference type="HAMAP-Rule" id="MF_01236"/>
    </source>
</evidence>
<evidence type="ECO:0000256" key="2">
    <source>
        <dbReference type="SAM" id="MobiDB-lite"/>
    </source>
</evidence>
<protein>
    <recommendedName>
        <fullName evidence="1">HTH-type transcriptional repressor NanR</fullName>
    </recommendedName>
</protein>